<name>SODC_CAPHI</name>
<protein>
    <recommendedName>
        <fullName evidence="2">Superoxide dismutase [Cu-Zn]</fullName>
        <ecNumber evidence="2">1.15.1.1</ecNumber>
    </recommendedName>
</protein>
<comment type="function">
    <text>Destroys radicals which are normally produced within the cells and which are toxic to biological systems.</text>
</comment>
<comment type="catalytic activity">
    <reaction>
        <text>2 superoxide + 2 H(+) = H2O2 + O2</text>
        <dbReference type="Rhea" id="RHEA:20696"/>
        <dbReference type="ChEBI" id="CHEBI:15378"/>
        <dbReference type="ChEBI" id="CHEBI:15379"/>
        <dbReference type="ChEBI" id="CHEBI:16240"/>
        <dbReference type="ChEBI" id="CHEBI:18421"/>
        <dbReference type="EC" id="1.15.1.1"/>
    </reaction>
</comment>
<comment type="cofactor">
    <cofactor evidence="1">
        <name>Cu cation</name>
        <dbReference type="ChEBI" id="CHEBI:23378"/>
    </cofactor>
    <text evidence="1">Binds 1 copper ion per subunit.</text>
</comment>
<comment type="cofactor">
    <cofactor evidence="1">
        <name>Zn(2+)</name>
        <dbReference type="ChEBI" id="CHEBI:29105"/>
    </cofactor>
    <text evidence="1">Binds 1 zinc ion per subunit.</text>
</comment>
<comment type="subunit">
    <text evidence="2 5">Homodimer; non-disulfide-linked (By similarity). Heterodimer with SOD1. The heterodimer CCS:SOD1 interacts with SLC31A1; this heterotrimer is Cu(1+)-mediated and its maintenance is regulated through SOD1 activation (By similarity).</text>
</comment>
<comment type="subcellular location">
    <subcellularLocation>
        <location evidence="1">Cytoplasm</location>
    </subcellularLocation>
    <subcellularLocation>
        <location evidence="1">Nucleus</location>
    </subcellularLocation>
</comment>
<comment type="PTM">
    <text evidence="1">Palmitoylation helps nuclear targeting and decreases catalytic activity.</text>
</comment>
<comment type="PTM">
    <text evidence="2">Succinylation, adjacent to copper catalytic site, probably inhibits activity. Desuccinylation by SIRT5 enhances activity.</text>
</comment>
<comment type="similarity">
    <text evidence="7">Belongs to the Cu-Zn superoxide dismutase family.</text>
</comment>
<feature type="initiator methionine" description="Removed" evidence="3">
    <location>
        <position position="1"/>
    </location>
</feature>
<feature type="chain" id="PRO_0000164052" description="Superoxide dismutase [Cu-Zn]">
    <location>
        <begin position="2"/>
        <end position="152"/>
    </location>
</feature>
<feature type="region of interest" description="Disordered" evidence="6">
    <location>
        <begin position="55"/>
        <end position="79"/>
    </location>
</feature>
<feature type="binding site" evidence="1">
    <location>
        <position position="45"/>
    </location>
    <ligand>
        <name>Cu cation</name>
        <dbReference type="ChEBI" id="CHEBI:23378"/>
        <note>catalytic</note>
    </ligand>
</feature>
<feature type="binding site" evidence="1">
    <location>
        <position position="47"/>
    </location>
    <ligand>
        <name>Cu cation</name>
        <dbReference type="ChEBI" id="CHEBI:23378"/>
        <note>catalytic</note>
    </ligand>
</feature>
<feature type="binding site" evidence="1">
    <location>
        <position position="62"/>
    </location>
    <ligand>
        <name>Cu cation</name>
        <dbReference type="ChEBI" id="CHEBI:23378"/>
        <note>catalytic</note>
    </ligand>
</feature>
<feature type="binding site" evidence="1">
    <location>
        <position position="62"/>
    </location>
    <ligand>
        <name>Zn(2+)</name>
        <dbReference type="ChEBI" id="CHEBI:29105"/>
        <note>structural</note>
    </ligand>
</feature>
<feature type="binding site" evidence="1">
    <location>
        <position position="70"/>
    </location>
    <ligand>
        <name>Zn(2+)</name>
        <dbReference type="ChEBI" id="CHEBI:29105"/>
        <note>structural</note>
    </ligand>
</feature>
<feature type="binding site" evidence="1">
    <location>
        <position position="79"/>
    </location>
    <ligand>
        <name>Zn(2+)</name>
        <dbReference type="ChEBI" id="CHEBI:29105"/>
        <note>structural</note>
    </ligand>
</feature>
<feature type="binding site" evidence="1">
    <location>
        <position position="82"/>
    </location>
    <ligand>
        <name>Zn(2+)</name>
        <dbReference type="ChEBI" id="CHEBI:29105"/>
        <note>structural</note>
    </ligand>
</feature>
<feature type="binding site" evidence="1">
    <location>
        <position position="119"/>
    </location>
    <ligand>
        <name>Cu cation</name>
        <dbReference type="ChEBI" id="CHEBI:23378"/>
        <note>catalytic</note>
    </ligand>
</feature>
<feature type="modified residue" description="N-acetylalanine" evidence="3">
    <location>
        <position position="2"/>
    </location>
</feature>
<feature type="modified residue" description="N6-succinyllysine" evidence="5">
    <location>
        <position position="4"/>
    </location>
</feature>
<feature type="modified residue" description="N6-succinyllysine" evidence="5">
    <location>
        <position position="10"/>
    </location>
</feature>
<feature type="modified residue" description="N6-succinyllysine" evidence="5">
    <location>
        <position position="90"/>
    </location>
</feature>
<feature type="modified residue" description="Phosphoserine" evidence="4">
    <location>
        <position position="104"/>
    </location>
</feature>
<feature type="modified residue" description="Phosphoserine" evidence="5">
    <location>
        <position position="106"/>
    </location>
</feature>
<feature type="modified residue" description="N6-acetyllysine; alternate" evidence="2">
    <location>
        <position position="121"/>
    </location>
</feature>
<feature type="modified residue" description="N6-succinyllysine; alternate" evidence="2">
    <location>
        <position position="121"/>
    </location>
</feature>
<feature type="modified residue" description="N6-acetyllysine; alternate" evidence="5">
    <location>
        <position position="135"/>
    </location>
</feature>
<feature type="modified residue" description="N6-succinyllysine; alternate" evidence="5">
    <location>
        <position position="135"/>
    </location>
</feature>
<feature type="lipid moiety-binding region" description="S-palmitoyl cysteine" evidence="1">
    <location>
        <position position="7"/>
    </location>
</feature>
<feature type="disulfide bond" evidence="1">
    <location>
        <begin position="56"/>
        <end position="145"/>
    </location>
</feature>
<reference key="1">
    <citation type="submission" date="2005-02" db="EMBL/GenBank/DDBJ databases">
        <title>Mammalian superoxide dismutase.</title>
        <authorList>
            <person name="Fukuhara R."/>
            <person name="Kageyama T."/>
        </authorList>
    </citation>
    <scope>NUCLEOTIDE SEQUENCE [MRNA]</scope>
</reference>
<organism>
    <name type="scientific">Capra hircus</name>
    <name type="common">Goat</name>
    <dbReference type="NCBI Taxonomy" id="9925"/>
    <lineage>
        <taxon>Eukaryota</taxon>
        <taxon>Metazoa</taxon>
        <taxon>Chordata</taxon>
        <taxon>Craniata</taxon>
        <taxon>Vertebrata</taxon>
        <taxon>Euteleostomi</taxon>
        <taxon>Mammalia</taxon>
        <taxon>Eutheria</taxon>
        <taxon>Laurasiatheria</taxon>
        <taxon>Artiodactyla</taxon>
        <taxon>Ruminantia</taxon>
        <taxon>Pecora</taxon>
        <taxon>Bovidae</taxon>
        <taxon>Caprinae</taxon>
        <taxon>Capra</taxon>
    </lineage>
</organism>
<proteinExistence type="evidence at transcript level"/>
<accession>Q5FB29</accession>
<sequence>MATKAVCVLKGDGPVQGTIHFEAKGDKVVVTGSITGLTEGDHGFHVHQFGDNTQGCTSAGPHFNPLSKKHGGPKDEERHVGDLGNVKADKNGVAIVDIVDPLISLSGEYSIIGRTMVVHEKPDDLGRGGNEESTKTGNAGSCLACGVIGIAP</sequence>
<evidence type="ECO:0000250" key="1"/>
<evidence type="ECO:0000250" key="2">
    <source>
        <dbReference type="UniProtKB" id="P00441"/>
    </source>
</evidence>
<evidence type="ECO:0000250" key="3">
    <source>
        <dbReference type="UniProtKB" id="P00442"/>
    </source>
</evidence>
<evidence type="ECO:0000250" key="4">
    <source>
        <dbReference type="UniProtKB" id="P07632"/>
    </source>
</evidence>
<evidence type="ECO:0000250" key="5">
    <source>
        <dbReference type="UniProtKB" id="P08228"/>
    </source>
</evidence>
<evidence type="ECO:0000256" key="6">
    <source>
        <dbReference type="SAM" id="MobiDB-lite"/>
    </source>
</evidence>
<evidence type="ECO:0000305" key="7"/>
<gene>
    <name evidence="2" type="primary">SOD1</name>
</gene>
<keyword id="KW-0007">Acetylation</keyword>
<keyword id="KW-0049">Antioxidant</keyword>
<keyword id="KW-0186">Copper</keyword>
<keyword id="KW-0963">Cytoplasm</keyword>
<keyword id="KW-1015">Disulfide bond</keyword>
<keyword id="KW-0449">Lipoprotein</keyword>
<keyword id="KW-0479">Metal-binding</keyword>
<keyword id="KW-0539">Nucleus</keyword>
<keyword id="KW-0560">Oxidoreductase</keyword>
<keyword id="KW-0564">Palmitate</keyword>
<keyword id="KW-0597">Phosphoprotein</keyword>
<keyword id="KW-1185">Reference proteome</keyword>
<keyword id="KW-0862">Zinc</keyword>
<dbReference type="EC" id="1.15.1.1" evidence="2"/>
<dbReference type="EMBL" id="AB201469">
    <property type="protein sequence ID" value="BAD89543.1"/>
    <property type="molecule type" value="mRNA"/>
</dbReference>
<dbReference type="RefSeq" id="NP_001272479.1">
    <property type="nucleotide sequence ID" value="NM_001285550.1"/>
</dbReference>
<dbReference type="SMR" id="Q5FB29"/>
<dbReference type="STRING" id="9925.ENSCHIP00000012974"/>
<dbReference type="GeneID" id="100861196"/>
<dbReference type="KEGG" id="chx:100861196"/>
<dbReference type="CTD" id="6647"/>
<dbReference type="OrthoDB" id="2015551at2759"/>
<dbReference type="Proteomes" id="UP000291000">
    <property type="component" value="Unassembled WGS sequence"/>
</dbReference>
<dbReference type="Proteomes" id="UP000694566">
    <property type="component" value="Unplaced"/>
</dbReference>
<dbReference type="GO" id="GO:0005737">
    <property type="term" value="C:cytoplasm"/>
    <property type="evidence" value="ECO:0007669"/>
    <property type="project" value="UniProtKB-SubCell"/>
</dbReference>
<dbReference type="GO" id="GO:0005634">
    <property type="term" value="C:nucleus"/>
    <property type="evidence" value="ECO:0007669"/>
    <property type="project" value="UniProtKB-SubCell"/>
</dbReference>
<dbReference type="GO" id="GO:0005507">
    <property type="term" value="F:copper ion binding"/>
    <property type="evidence" value="ECO:0007669"/>
    <property type="project" value="InterPro"/>
</dbReference>
<dbReference type="GO" id="GO:0004784">
    <property type="term" value="F:superoxide dismutase activity"/>
    <property type="evidence" value="ECO:0000250"/>
    <property type="project" value="UniProtKB"/>
</dbReference>
<dbReference type="GO" id="GO:0072593">
    <property type="term" value="P:reactive oxygen species metabolic process"/>
    <property type="evidence" value="ECO:0000250"/>
    <property type="project" value="UniProtKB"/>
</dbReference>
<dbReference type="GO" id="GO:0019430">
    <property type="term" value="P:removal of superoxide radicals"/>
    <property type="evidence" value="ECO:0000250"/>
    <property type="project" value="UniProtKB"/>
</dbReference>
<dbReference type="CDD" id="cd00305">
    <property type="entry name" value="Cu-Zn_Superoxide_Dismutase"/>
    <property type="match status" value="1"/>
</dbReference>
<dbReference type="FunFam" id="2.60.40.200:FF:000001">
    <property type="entry name" value="Superoxide dismutase [Cu-Zn]"/>
    <property type="match status" value="1"/>
</dbReference>
<dbReference type="Gene3D" id="2.60.40.200">
    <property type="entry name" value="Superoxide dismutase, copper/zinc binding domain"/>
    <property type="match status" value="1"/>
</dbReference>
<dbReference type="InterPro" id="IPR036423">
    <property type="entry name" value="SOD-like_Cu/Zn_dom_sf"/>
</dbReference>
<dbReference type="InterPro" id="IPR024134">
    <property type="entry name" value="SOD_Cu/Zn_/chaperone"/>
</dbReference>
<dbReference type="InterPro" id="IPR018152">
    <property type="entry name" value="SOD_Cu/Zn_BS"/>
</dbReference>
<dbReference type="InterPro" id="IPR001424">
    <property type="entry name" value="SOD_Cu_Zn_dom"/>
</dbReference>
<dbReference type="PANTHER" id="PTHR10003">
    <property type="entry name" value="SUPEROXIDE DISMUTASE CU-ZN -RELATED"/>
    <property type="match status" value="1"/>
</dbReference>
<dbReference type="Pfam" id="PF00080">
    <property type="entry name" value="Sod_Cu"/>
    <property type="match status" value="1"/>
</dbReference>
<dbReference type="PRINTS" id="PR00068">
    <property type="entry name" value="CUZNDISMTASE"/>
</dbReference>
<dbReference type="SUPFAM" id="SSF49329">
    <property type="entry name" value="Cu,Zn superoxide dismutase-like"/>
    <property type="match status" value="1"/>
</dbReference>
<dbReference type="PROSITE" id="PS00087">
    <property type="entry name" value="SOD_CU_ZN_1"/>
    <property type="match status" value="1"/>
</dbReference>